<dbReference type="EMBL" id="AE000516">
    <property type="protein sequence ID" value="AAK46957.1"/>
    <property type="molecule type" value="Genomic_DNA"/>
</dbReference>
<dbReference type="PIR" id="G70723">
    <property type="entry name" value="G70723"/>
</dbReference>
<dbReference type="RefSeq" id="WP_003413332.1">
    <property type="nucleotide sequence ID" value="NZ_KK341227.1"/>
</dbReference>
<dbReference type="KEGG" id="mtc:MT2644"/>
<dbReference type="PATRIC" id="fig|83331.31.peg.2851"/>
<dbReference type="HOGENOM" id="CLU_048114_0_0_11"/>
<dbReference type="Proteomes" id="UP000001020">
    <property type="component" value="Chromosome"/>
</dbReference>
<dbReference type="Gene3D" id="3.40.390.70">
    <property type="match status" value="1"/>
</dbReference>
<dbReference type="InterPro" id="IPR031321">
    <property type="entry name" value="UCP012641"/>
</dbReference>
<dbReference type="InterPro" id="IPR011201">
    <property type="entry name" value="Zinc-ribbon_6_bact"/>
</dbReference>
<dbReference type="Pfam" id="PF15887">
    <property type="entry name" value="Peptidase_Mx"/>
    <property type="match status" value="1"/>
</dbReference>
<dbReference type="Pfam" id="PF10005">
    <property type="entry name" value="Zn_ribbon_DZR_6"/>
    <property type="match status" value="1"/>
</dbReference>
<dbReference type="PIRSF" id="PIRSF012641">
    <property type="entry name" value="UCP012641"/>
    <property type="match status" value="1"/>
</dbReference>
<sequence length="341" mass="38003">MRDFHCPNCGQRLAFENSACLSCGSALGFSLGRMALLVIADDADVQLCANLHLAQCNWLVPSDQLGGLCSSCVLTIERPSDTNTAGLAEFARAEGAKRRLIAELHELKLPIVGRDQDPDHGLAFRLLSSAHENVTTGHQNGVITLDLAEGDDVHREQLRVEMDEPYRTLLGHFRHEIGHYYFYRLIASSSDYLSRFNELFGDPDADYSQALDRHYRGGPPEGWQDSFVSSYATMHASEDWAETFAHYLHIRDALDTAAWCGLAPASATFDRPALGPSAFNTIIDKWLPLSWSLNMVNRSMGHDDLYPFVLPAAVLEKMRFIHTVVDEVAPDFEPAHSRRTV</sequence>
<feature type="chain" id="PRO_0000427518" description="Uncharacterized protein MT2644">
    <location>
        <begin position="1"/>
        <end position="341"/>
    </location>
</feature>
<keyword id="KW-1185">Reference proteome</keyword>
<organism>
    <name type="scientific">Mycobacterium tuberculosis (strain CDC 1551 / Oshkosh)</name>
    <dbReference type="NCBI Taxonomy" id="83331"/>
    <lineage>
        <taxon>Bacteria</taxon>
        <taxon>Bacillati</taxon>
        <taxon>Actinomycetota</taxon>
        <taxon>Actinomycetes</taxon>
        <taxon>Mycobacteriales</taxon>
        <taxon>Mycobacteriaceae</taxon>
        <taxon>Mycobacterium</taxon>
        <taxon>Mycobacterium tuberculosis complex</taxon>
    </lineage>
</organism>
<gene>
    <name type="ordered locus">MT2644</name>
</gene>
<name>Y2568_MYCTO</name>
<reference key="1">
    <citation type="journal article" date="2002" name="J. Bacteriol.">
        <title>Whole-genome comparison of Mycobacterium tuberculosis clinical and laboratory strains.</title>
        <authorList>
            <person name="Fleischmann R.D."/>
            <person name="Alland D."/>
            <person name="Eisen J.A."/>
            <person name="Carpenter L."/>
            <person name="White O."/>
            <person name="Peterson J.D."/>
            <person name="DeBoy R.T."/>
            <person name="Dodson R.J."/>
            <person name="Gwinn M.L."/>
            <person name="Haft D.H."/>
            <person name="Hickey E.K."/>
            <person name="Kolonay J.F."/>
            <person name="Nelson W.C."/>
            <person name="Umayam L.A."/>
            <person name="Ermolaeva M.D."/>
            <person name="Salzberg S.L."/>
            <person name="Delcher A."/>
            <person name="Utterback T.R."/>
            <person name="Weidman J.F."/>
            <person name="Khouri H.M."/>
            <person name="Gill J."/>
            <person name="Mikula A."/>
            <person name="Bishai W."/>
            <person name="Jacobs W.R. Jr."/>
            <person name="Venter J.C."/>
            <person name="Fraser C.M."/>
        </authorList>
    </citation>
    <scope>NUCLEOTIDE SEQUENCE [LARGE SCALE GENOMIC DNA]</scope>
    <source>
        <strain>CDC 1551 / Oshkosh</strain>
    </source>
</reference>
<proteinExistence type="predicted"/>
<protein>
    <recommendedName>
        <fullName>Uncharacterized protein MT2644</fullName>
    </recommendedName>
</protein>
<accession>P9WL94</accession>
<accession>L0TBM7</accession>
<accession>P65009</accession>
<accession>Q50653</accession>